<sequence length="676" mass="74577">MGVTGILQLPRDRFKRTSFFLWVIILFQRTFSIPLGVIHNSTLQVSDVDKLVCRDKLSSTNQLRSVGLNLEGNGVATDVPSATKRWGFRSGVPPKVVNYEAGEWAENCYNLEIKKPDGSECLPAAPDGIRGFPRCRYVHKVSGTGPCAGDFAFHKEGAFFLYDRLASTVIYRGTTFAEGVVAFLILPQAKKDFFSSHPLREPVNATEDPSSGYYSTTIRYQATGFGTNETEYLFEVDNLTYVQLESRFTPQFLLQLNETRYTSGKRSNTTGKLIWKVNPEIDTTIGEWAFWETKKNLTRKIRSEELSFTAVSNRAKNISGQSPARTSSDPGTNTTTEDHKIMASENSSAMVQVHSQGREAAVSHLTTLATISTSLRPPITKPGPDNSTHNTPVYKLDISEATQVEQHHRRTDNASTTSDTPPATTAAGPLKAENTNTSKGTDLLDPATTTSPQNHSETAGNNNTHHQDTGEESASSGKLGLITNTIAGVAGLITGGRRTRREAIVNAQPKCNPNLHYWTTQDEGAAIGLAWIPYFGPAAEGIYIEGLMHNQDGLICGLRQLANETTQALQLFLRATTELRTFSILNRKAIDFLLQRWGGTCHILGPDCCIEPHDWTKNITDKIDQIIHDFVDKTLPDQGDNDNWWTGWRQWIPAGIGVTGVIIAVIALFCICKFVF</sequence>
<name>VGP_EBOG4</name>
<feature type="signal peptide" evidence="4">
    <location>
        <begin position="1"/>
        <end position="32"/>
    </location>
</feature>
<feature type="chain" id="PRO_0000037464" description="Envelope glycoprotein">
    <location>
        <begin position="33"/>
        <end position="676"/>
    </location>
</feature>
<feature type="chain" id="PRO_0000037465" description="GP1" evidence="1">
    <location>
        <begin position="33"/>
        <end position="501"/>
    </location>
</feature>
<feature type="chain" id="PRO_0000037466" description="GP2" evidence="1">
    <location>
        <begin position="502"/>
        <end position="676"/>
    </location>
</feature>
<feature type="chain" id="PRO_0000245055" description="Shed GP" evidence="1">
    <location>
        <begin position="502"/>
        <end position="637"/>
    </location>
</feature>
<feature type="topological domain" description="Extracellular" evidence="4">
    <location>
        <begin position="33"/>
        <end position="650"/>
    </location>
</feature>
<feature type="transmembrane region" description="Helical" evidence="4">
    <location>
        <begin position="651"/>
        <end position="671"/>
    </location>
</feature>
<feature type="topological domain" description="Cytoplasmic" evidence="4">
    <location>
        <begin position="672"/>
        <end position="676"/>
    </location>
</feature>
<feature type="region of interest" description="Receptor-binding" evidence="1">
    <location>
        <begin position="54"/>
        <end position="201"/>
    </location>
</feature>
<feature type="region of interest" description="Mucin-like region" evidence="1">
    <location>
        <begin position="305"/>
        <end position="485"/>
    </location>
</feature>
<feature type="region of interest" description="Disordered" evidence="5">
    <location>
        <begin position="314"/>
        <end position="337"/>
    </location>
</feature>
<feature type="region of interest" description="Disordered" evidence="5">
    <location>
        <begin position="373"/>
        <end position="392"/>
    </location>
</feature>
<feature type="region of interest" description="Disordered" evidence="5">
    <location>
        <begin position="402"/>
        <end position="479"/>
    </location>
</feature>
<feature type="region of interest" description="Fusion peptide" evidence="1">
    <location>
        <begin position="524"/>
        <end position="539"/>
    </location>
</feature>
<feature type="coiled-coil region" evidence="4">
    <location>
        <begin position="554"/>
        <end position="595"/>
    </location>
</feature>
<feature type="coiled-coil region" evidence="4">
    <location>
        <begin position="615"/>
        <end position="634"/>
    </location>
</feature>
<feature type="compositionally biased region" description="Polar residues" evidence="5">
    <location>
        <begin position="314"/>
        <end position="335"/>
    </location>
</feature>
<feature type="compositionally biased region" description="Low complexity" evidence="5">
    <location>
        <begin position="414"/>
        <end position="427"/>
    </location>
</feature>
<feature type="compositionally biased region" description="Polar residues" evidence="5">
    <location>
        <begin position="447"/>
        <end position="464"/>
    </location>
</feature>
<feature type="site" description="Involved in receptor recognition and/or post-binding events" evidence="4">
    <location>
        <position position="57"/>
    </location>
</feature>
<feature type="site" description="Involved in receptor recognition and/or post-binding events" evidence="4">
    <location>
        <position position="63"/>
    </location>
</feature>
<feature type="site" description="Involved in receptor recognition and/or post-binding events" evidence="4">
    <location>
        <position position="64"/>
    </location>
</feature>
<feature type="site" description="Involved in receptor recognition and/or post-binding events" evidence="4">
    <location>
        <position position="88"/>
    </location>
</feature>
<feature type="site" description="Involved in receptor recognition and/or post-binding events" evidence="4">
    <location>
        <position position="95"/>
    </location>
</feature>
<feature type="site" description="Involved in receptor recognition and/or post-binding events" evidence="4">
    <location>
        <position position="170"/>
    </location>
</feature>
<feature type="site" description="Cleavage; by host furin" evidence="1">
    <location>
        <begin position="501"/>
        <end position="502"/>
    </location>
</feature>
<feature type="site" description="Cleavage; by host ADAM17" evidence="1">
    <location>
        <begin position="637"/>
        <end position="638"/>
    </location>
</feature>
<feature type="lipid moiety-binding region" description="S-palmitoyl cysteine; by host" evidence="2">
    <location>
        <position position="670"/>
    </location>
</feature>
<feature type="lipid moiety-binding region" description="S-palmitoyl cysteine; by host" evidence="2">
    <location>
        <position position="672"/>
    </location>
</feature>
<feature type="glycosylation site" description="N-linked (GlcNAc...) asparagine; by host" evidence="4">
    <location>
        <position position="40"/>
    </location>
</feature>
<feature type="glycosylation site" description="N-linked (GlcNAc...) asparagine; by host" evidence="4">
    <location>
        <position position="204"/>
    </location>
</feature>
<feature type="glycosylation site" description="N-linked (GlcNAc...) asparagine; by host" evidence="4">
    <location>
        <position position="228"/>
    </location>
</feature>
<feature type="glycosylation site" description="N-linked (GlcNAc...) asparagine; by host" evidence="4">
    <location>
        <position position="238"/>
    </location>
</feature>
<feature type="glycosylation site" description="N-linked (GlcNAc...) asparagine; by host" evidence="4">
    <location>
        <position position="257"/>
    </location>
</feature>
<feature type="glycosylation site" description="N-linked (GlcNAc...) asparagine; by host" evidence="4">
    <location>
        <position position="268"/>
    </location>
</feature>
<feature type="glycosylation site" description="N-linked (GlcNAc...) asparagine; by host" evidence="4">
    <location>
        <position position="296"/>
    </location>
</feature>
<feature type="glycosylation site" description="N-linked (GlcNAc...) asparagine; by host" evidence="4">
    <location>
        <position position="317"/>
    </location>
</feature>
<feature type="glycosylation site" description="N-linked (GlcNAc...) asparagine; by host" evidence="4">
    <location>
        <position position="333"/>
    </location>
</feature>
<feature type="glycosylation site" description="N-linked (GlcNAc...) asparagine; by host" evidence="4">
    <location>
        <position position="346"/>
    </location>
</feature>
<feature type="glycosylation site" description="N-linked (GlcNAc...) asparagine; by host" evidence="4">
    <location>
        <position position="386"/>
    </location>
</feature>
<feature type="glycosylation site" description="N-linked (GlcNAc...) asparagine; by host" evidence="4">
    <location>
        <position position="413"/>
    </location>
</feature>
<feature type="glycosylation site" description="N-linked (GlcNAc...) asparagine; by host" evidence="4">
    <location>
        <position position="436"/>
    </location>
</feature>
<feature type="glycosylation site" description="N-linked (GlcNAc...) asparagine; by host" evidence="4">
    <location>
        <position position="454"/>
    </location>
</feature>
<feature type="glycosylation site" description="N-linked (GlcNAc...) asparagine; by host" evidence="4">
    <location>
        <position position="462"/>
    </location>
</feature>
<feature type="glycosylation site" description="N-linked (GlcNAc...) asparagine; by host" evidence="4">
    <location>
        <position position="563"/>
    </location>
</feature>
<feature type="glycosylation site" description="N-linked (GlcNAc...) asparagine; by host" evidence="4">
    <location>
        <position position="618"/>
    </location>
</feature>
<feature type="disulfide bond" description="Interchain (between GP1 and GP2 chains)" evidence="1">
    <location>
        <begin position="53"/>
        <end position="609"/>
    </location>
</feature>
<feature type="disulfide bond" evidence="4">
    <location>
        <begin position="108"/>
        <end position="135"/>
    </location>
</feature>
<feature type="disulfide bond" evidence="4">
    <location>
        <begin position="121"/>
        <end position="147"/>
    </location>
</feature>
<feature type="disulfide bond" evidence="4">
    <location>
        <begin position="511"/>
        <end position="556"/>
    </location>
</feature>
<feature type="disulfide bond" evidence="7">
    <location>
        <begin position="601"/>
        <end position="608"/>
    </location>
</feature>
<feature type="sequence variant" description="In strain: Isolate Bouee-96.">
    <original>R</original>
    <variation>K</variation>
    <location>
        <position position="219"/>
    </location>
</feature>
<feature type="sequence variant" description="In strain: Isolate Bouee-96.">
    <original>R</original>
    <variation>I</variation>
    <location>
        <position position="260"/>
    </location>
</feature>
<feature type="sequence variant" description="In strain: Isolate Bouee-96.">
    <original>L</original>
    <variation>P</variation>
    <location>
        <position position="368"/>
    </location>
</feature>
<feature type="sequence variant" description="In strain: Isolate Bouee-96.">
    <original>R</original>
    <variation>Q</variation>
    <location>
        <position position="376"/>
    </location>
</feature>
<feature type="sequence variant" description="In strain: Isolate Bouee-96.">
    <original>I</original>
    <variation>T</variation>
    <location>
        <position position="379"/>
    </location>
</feature>
<feature type="sequence variant" description="In strain: Isolate Bouee-96.">
    <original>A</original>
    <variation>T</variation>
    <location>
        <position position="474"/>
    </location>
</feature>
<feature type="sequence variant" description="In strain: Isolate Bouee-96.">
    <original>I</original>
    <variation>T</variation>
    <location>
        <position position="544"/>
    </location>
</feature>
<feature type="helix" evidence="10">
    <location>
        <begin position="540"/>
        <end position="548"/>
    </location>
</feature>
<feature type="helix" evidence="10">
    <location>
        <begin position="549"/>
        <end position="551"/>
    </location>
</feature>
<feature type="helix" evidence="10">
    <location>
        <begin position="554"/>
        <end position="593"/>
    </location>
</feature>
<feature type="helix" evidence="10">
    <location>
        <begin position="595"/>
        <end position="597"/>
    </location>
</feature>
<feature type="helix" evidence="10">
    <location>
        <begin position="600"/>
        <end position="604"/>
    </location>
</feature>
<feature type="helix" evidence="10">
    <location>
        <begin position="605"/>
        <end position="609"/>
    </location>
</feature>
<feature type="helix" evidence="10">
    <location>
        <begin position="616"/>
        <end position="630"/>
    </location>
</feature>
<protein>
    <recommendedName>
        <fullName>Envelope glycoprotein</fullName>
    </recommendedName>
    <alternativeName>
        <fullName>GP1,2</fullName>
        <shortName>GP</shortName>
    </alternativeName>
    <component>
        <recommendedName>
            <fullName>GP1</fullName>
        </recommendedName>
    </component>
    <component>
        <recommendedName>
            <fullName>GP2</fullName>
        </recommendedName>
    </component>
    <component>
        <recommendedName>
            <fullName>Shed GP</fullName>
        </recommendedName>
        <alternativeName>
            <fullName>GP1,2-delta</fullName>
        </alternativeName>
    </component>
</protein>
<keyword id="KW-0002">3D-structure</keyword>
<keyword id="KW-1165">Clathrin-mediated endocytosis of virus by host</keyword>
<keyword id="KW-0165">Cleavage on pair of basic residues</keyword>
<keyword id="KW-0175">Coiled coil</keyword>
<keyword id="KW-1015">Disulfide bond</keyword>
<keyword id="KW-1170">Fusion of virus membrane with host endosomal membrane</keyword>
<keyword id="KW-1168">Fusion of virus membrane with host membrane</keyword>
<keyword id="KW-0325">Glycoprotein</keyword>
<keyword id="KW-1032">Host cell membrane</keyword>
<keyword id="KW-1043">Host membrane</keyword>
<keyword id="KW-0945">Host-virus interaction</keyword>
<keyword id="KW-1090">Inhibition of host innate immune response by virus</keyword>
<keyword id="KW-1084">Inhibition of host tetherin by virus</keyword>
<keyword id="KW-0449">Lipoprotein</keyword>
<keyword id="KW-0472">Membrane</keyword>
<keyword id="KW-0564">Palmitate</keyword>
<keyword id="KW-0691">RNA editing</keyword>
<keyword id="KW-0964">Secreted</keyword>
<keyword id="KW-0732">Signal</keyword>
<keyword id="KW-0812">Transmembrane</keyword>
<keyword id="KW-1133">Transmembrane helix</keyword>
<keyword id="KW-1161">Viral attachment to host cell</keyword>
<keyword id="KW-1234">Viral attachment to host entry receptor</keyword>
<keyword id="KW-0261">Viral envelope protein</keyword>
<keyword id="KW-0899">Viral immunoevasion</keyword>
<keyword id="KW-1162">Viral penetration into host cytoplasm</keyword>
<keyword id="KW-0946">Virion</keyword>
<keyword id="KW-1164">Virus endocytosis by host</keyword>
<keyword id="KW-1160">Virus entry into host cell</keyword>
<organismHost>
    <name type="scientific">Epomops franqueti</name>
    <name type="common">Franquet's epauletted fruit bat</name>
    <name type="synonym">Epomophorus franqueti</name>
    <dbReference type="NCBI Taxonomy" id="77231"/>
</organismHost>
<organismHost>
    <name type="scientific">Homo sapiens</name>
    <name type="common">Human</name>
    <dbReference type="NCBI Taxonomy" id="9606"/>
</organismHost>
<organismHost>
    <name type="scientific">Myonycteris torquata</name>
    <name type="common">Little collared fruit bat</name>
    <dbReference type="NCBI Taxonomy" id="77243"/>
</organismHost>
<reference key="1">
    <citation type="journal article" date="1997" name="Virology">
        <title>Emergence of subtype Zaire Ebola virus in Gabon.</title>
        <authorList>
            <person name="Volchkov V."/>
            <person name="Volchkova V."/>
            <person name="Eckel C."/>
            <person name="Klenk H.-D."/>
            <person name="Bouloy M."/>
            <person name="Leguenno B."/>
            <person name="Feldmann H."/>
        </authorList>
    </citation>
    <scope>NUCLEOTIDE SEQUENCE [GENOMIC RNA]</scope>
</reference>
<reference key="2">
    <citation type="journal article" date="2002" name="J. Gen. Virol.">
        <title>Sequence analysis of the GP, NP, VP40 and VP24 genes of Ebola virus isolated from deceased, surviving and asymptomatically infected individuals during the 1996 outbreak in Gabon: comparative studies and phylogenetic characterization.</title>
        <authorList>
            <person name="Leroy E.M."/>
            <person name="Baize S."/>
            <person name="Mavoungou E."/>
            <person name="Apetrei C."/>
        </authorList>
    </citation>
    <scope>NUCLEOTIDE SEQUENCE [MRNA]</scope>
    <source>
        <strain>Isolate Bouee-96</strain>
    </source>
</reference>
<reference key="3">
    <citation type="journal article" date="2006" name="J. Virol.">
        <title>Tyro3 family-mediated cell entry of Ebola and Marburg viruses.</title>
        <authorList>
            <person name="Shimojima M."/>
            <person name="Takada A."/>
            <person name="Ebihara H."/>
            <person name="Neumann G."/>
            <person name="Fujioka K."/>
            <person name="Irimura T."/>
            <person name="Jones S."/>
            <person name="Feldmann H."/>
            <person name="Kawaoka Y."/>
        </authorList>
    </citation>
    <scope>FUNCTION (GP1)</scope>
</reference>
<reference evidence="9" key="4">
    <citation type="journal article" date="1998" name="Mol. Cell">
        <title>Crystal structure of the Ebola virus membrane fusion subunit, GP2, from the envelope glycoprotein ectodomain.</title>
        <authorList>
            <person name="Weissenhorn W."/>
            <person name="Carfi A."/>
            <person name="Lee K.H."/>
            <person name="Skehel J.J."/>
            <person name="Wiley D.C."/>
        </authorList>
    </citation>
    <scope>X-RAY CRYSTALLOGRAPHY (3.00 ANGSTROMS) OF 552-650</scope>
    <scope>DISULFIDE BONDS</scope>
</reference>
<evidence type="ECO:0000250" key="1"/>
<evidence type="ECO:0000250" key="2">
    <source>
        <dbReference type="UniProtKB" id="Q05320"/>
    </source>
</evidence>
<evidence type="ECO:0000250" key="3">
    <source>
        <dbReference type="UniProtKB" id="Q66814"/>
    </source>
</evidence>
<evidence type="ECO:0000255" key="4"/>
<evidence type="ECO:0000256" key="5">
    <source>
        <dbReference type="SAM" id="MobiDB-lite"/>
    </source>
</evidence>
<evidence type="ECO:0000269" key="6">
    <source>
    </source>
</evidence>
<evidence type="ECO:0000269" key="7">
    <source>
    </source>
</evidence>
<evidence type="ECO:0000305" key="8"/>
<evidence type="ECO:0007744" key="9">
    <source>
        <dbReference type="PDB" id="1EBO"/>
    </source>
</evidence>
<evidence type="ECO:0007829" key="10">
    <source>
        <dbReference type="PDB" id="1EBO"/>
    </source>
</evidence>
<proteinExistence type="evidence at protein level"/>
<accession>O11457</accession>
<accession>Q913A3</accession>
<dbReference type="EMBL" id="U77384">
    <property type="protein sequence ID" value="AAC57989.1"/>
    <property type="molecule type" value="Genomic_RNA"/>
</dbReference>
<dbReference type="EMBL" id="AY058898">
    <property type="protein sequence ID" value="AAL25818.1"/>
    <property type="molecule type" value="mRNA"/>
</dbReference>
<dbReference type="PDB" id="1EBO">
    <property type="method" value="X-ray"/>
    <property type="resolution" value="3.00 A"/>
    <property type="chains" value="A/B/C/D/E/F=552-650"/>
</dbReference>
<dbReference type="PDB" id="6EA7">
    <property type="method" value="X-ray"/>
    <property type="resolution" value="4.25 A"/>
    <property type="chains" value="B/D/F=502-612"/>
</dbReference>
<dbReference type="PDBsum" id="1EBO"/>
<dbReference type="PDBsum" id="6EA7"/>
<dbReference type="BMRB" id="O11457"/>
<dbReference type="SMR" id="O11457"/>
<dbReference type="GlyCosmos" id="O11457">
    <property type="glycosylation" value="17 sites, No reported glycans"/>
</dbReference>
<dbReference type="EvolutionaryTrace" id="O11457"/>
<dbReference type="GO" id="GO:0005576">
    <property type="term" value="C:extracellular region"/>
    <property type="evidence" value="ECO:0007669"/>
    <property type="project" value="UniProtKB-SubCell"/>
</dbReference>
<dbReference type="GO" id="GO:0020002">
    <property type="term" value="C:host cell plasma membrane"/>
    <property type="evidence" value="ECO:0007669"/>
    <property type="project" value="UniProtKB-SubCell"/>
</dbReference>
<dbReference type="GO" id="GO:0016020">
    <property type="term" value="C:membrane"/>
    <property type="evidence" value="ECO:0007669"/>
    <property type="project" value="UniProtKB-KW"/>
</dbReference>
<dbReference type="GO" id="GO:0019031">
    <property type="term" value="C:viral envelope"/>
    <property type="evidence" value="ECO:0007669"/>
    <property type="project" value="UniProtKB-KW"/>
</dbReference>
<dbReference type="GO" id="GO:0055036">
    <property type="term" value="C:virion membrane"/>
    <property type="evidence" value="ECO:0007669"/>
    <property type="project" value="UniProtKB-SubCell"/>
</dbReference>
<dbReference type="GO" id="GO:0075512">
    <property type="term" value="P:clathrin-dependent endocytosis of virus by host cell"/>
    <property type="evidence" value="ECO:0007669"/>
    <property type="project" value="UniProtKB-KW"/>
</dbReference>
<dbReference type="GO" id="GO:0098670">
    <property type="term" value="P:entry receptor-mediated virion attachment to host cell"/>
    <property type="evidence" value="ECO:0007669"/>
    <property type="project" value="UniProtKB-KW"/>
</dbReference>
<dbReference type="GO" id="GO:0039654">
    <property type="term" value="P:fusion of virus membrane with host endosome membrane"/>
    <property type="evidence" value="ECO:0007669"/>
    <property type="project" value="UniProtKB-KW"/>
</dbReference>
<dbReference type="GO" id="GO:0052170">
    <property type="term" value="P:symbiont-mediated suppression of host innate immune response"/>
    <property type="evidence" value="ECO:0007669"/>
    <property type="project" value="UniProtKB-KW"/>
</dbReference>
<dbReference type="GO" id="GO:0039587">
    <property type="term" value="P:symbiont-mediated-mediated suppression of host tetherin activity"/>
    <property type="evidence" value="ECO:0007669"/>
    <property type="project" value="UniProtKB-KW"/>
</dbReference>
<dbReference type="CDD" id="cd09850">
    <property type="entry name" value="Ebola-like_HR1-HR2"/>
    <property type="match status" value="1"/>
</dbReference>
<dbReference type="FunFam" id="1.10.287.210:FF:000003">
    <property type="entry name" value="Envelope glycoprotein"/>
    <property type="match status" value="1"/>
</dbReference>
<dbReference type="Gene3D" id="1.10.287.210">
    <property type="match status" value="1"/>
</dbReference>
<dbReference type="InterPro" id="IPR054584">
    <property type="entry name" value="Ebola-like_HR1-HR2"/>
</dbReference>
<dbReference type="InterPro" id="IPR014625">
    <property type="entry name" value="GPC_FiloV"/>
</dbReference>
<dbReference type="InterPro" id="IPR002561">
    <property type="entry name" value="GPC_filovir-type_extra_dom"/>
</dbReference>
<dbReference type="Pfam" id="PF22307">
    <property type="entry name" value="Ebola-like_HR1-HR2"/>
    <property type="match status" value="1"/>
</dbReference>
<dbReference type="Pfam" id="PF01611">
    <property type="entry name" value="Filo_glycop"/>
    <property type="match status" value="1"/>
</dbReference>
<dbReference type="PIRSF" id="PIRSF036874">
    <property type="entry name" value="GPC_FiloV"/>
    <property type="match status" value="1"/>
</dbReference>
<dbReference type="SUPFAM" id="SSF58069">
    <property type="entry name" value="Virus ectodomain"/>
    <property type="match status" value="1"/>
</dbReference>
<organism>
    <name type="scientific">Zaire ebolavirus (strain Gabon-94)</name>
    <name type="common">ZEBOV</name>
    <name type="synonym">Zaire Ebola virus</name>
    <dbReference type="NCBI Taxonomy" id="128947"/>
    <lineage>
        <taxon>Viruses</taxon>
        <taxon>Riboviria</taxon>
        <taxon>Orthornavirae</taxon>
        <taxon>Negarnaviricota</taxon>
        <taxon>Haploviricotina</taxon>
        <taxon>Monjiviricetes</taxon>
        <taxon>Mononegavirales</taxon>
        <taxon>Filoviridae</taxon>
        <taxon>Orthoebolavirus</taxon>
        <taxon>Orthoebolavirus zairense</taxon>
        <taxon>Zaire ebolavirus</taxon>
    </lineage>
</organism>
<gene>
    <name type="primary">GP</name>
</gene>
<comment type="function">
    <molecule>Envelope glycoprotein</molecule>
    <text evidence="2">Trimeric GP1,2 complexes form the virion surface spikes and mediate the viral entry processes, with GP1 acting as the receptor-binding subunit and GP2 as the membrane fusion subunit. At later times of infection, down-regulates the expression of various host cell surface molecules that are essential for immune surveillance and cell adhesion. Down-modulates several integrins including ITGA1, ITGA2, ITGA3, ITGA4, ITGA5, ITGA6, ITGAV and ITGB1. This decrease in cell adhesion molecules may lead to cell detachment, contributing to the disruption of blood vessel integrity and hemorrhages developed during infection (cytotoxicity). Interacts with host TLR4 and thereby stimulates the differentiation and activation of monocytes leading to bystander death of T-lymphocytes. Down-regulates as well the function of host natural killer cells. Counteracts the antiviral effect of host BST2/tetherin that restricts release of progeny virions from infected cells. However, cooperates with VP40 and host BST2 to activate canonical NF-kappa-B pathway in a manner dependent on neddylation.</text>
</comment>
<comment type="function">
    <molecule>Shed GP</molecule>
    <text evidence="2">Functions as a decoy for anti-GP1,2 antibodies thereby contributing to viral immune evasion. Interacts and activates host macrophages and dendritic cells inducing up-regulation of cytokine transcription. This effect is mediated throught activation of host TLR4.</text>
</comment>
<comment type="function">
    <molecule>GP1</molecule>
    <text evidence="2 3 6">Responsible for binding to the receptor(s) on target cells. Interacts with CD209/DC-SIGN and CLEC4M/DC-SIGNR which act as cofactors for virus entry into dendritic cells (DCs) and endothelial cells (By similarity). Binding to the macrophage specific lectin CLEC10A also seems to enhance virus infectivity (By similarity). Interaction with FOLR1/folate receptor alpha may be a cofactor for virus entry in some cell types, although results are contradictory (By similarity). Members of the Tyro3 receptor tyrosine kinase family also seem to be cell entry factors in filovirus infection (PubMed:17005688). Once attached, the virions are internalized through clathrin-dependent endocytosis and/or macropinocytosis. After internalization of the virus into the endosomes of the host cell, proteolysis of GP1 by two cysteine proteases, CTSB/cathepsin B and CTSL/cathepsin L removes the glycan cap and allows GP1 binding to the host entry receptor NPC1. NPC1-binding, Ca(2+) and acidic pH induce a conformational change of GP2, which unmasks its fusion peptide and permit membranes fusion (By similarity).</text>
</comment>
<comment type="function">
    <molecule>GP2</molecule>
    <text evidence="2">Acts as a class I viral fusion protein. Under the current model, the protein has at least 3 conformational states: pre-fusion native state, pre-hairpin intermediate state, and post-fusion hairpin state. During viral and target cell membrane fusion, the coiled coil regions (heptad repeats) assume a trimer-of-hairpins structure, positioning the fusion peptide in close proximity to the C-terminal region of the ectodomain. The formation of this structure appears to drive apposition and subsequent fusion of viral and target cell membranes. Responsible for penetration of the virus into the cell cytoplasm by mediating the fusion of the membrane of the endocytosed virus particle with the endosomal membrane. Low pH in endosomes induces an irreversible conformational change in GP2, releasing the fusion hydrophobic peptide.</text>
</comment>
<comment type="subunit">
    <molecule>Envelope glycoprotein</molecule>
    <text evidence="2">Homotrimer; each monomer consists of a GP1 and a GP2 subunit linked by disulfide bonds. The resulting peplomers (GP1,2) protrude from the virus surface as spikes. Interacts with host integrin alpha-V/ITGAV. Interacts with host CLEC10A. Binds also to host CD209 and CLEC4M/DC-SIGN(R). Interacts with host FOLR1. Interacts with BST2; this interaction inhibits the antiviral effect of BST2 and this allows viral release from infected cells. Interacts with host FCN1; this interaction enhances viral entry. Interacts with host TLR4; this interaction induces cell death in T-lymphocytes or proinflammatory cytokines and SOCS1 production in monocytes.</text>
</comment>
<comment type="subunit">
    <molecule>GP1</molecule>
    <text evidence="2">Interacts with host entry receptor NPC1.</text>
</comment>
<comment type="subunit">
    <molecule>Shed GP</molecule>
    <text evidence="2">GP1 and GP2delta are part of GP1,2delta soluble complexes released by ectodomain shedding.</text>
</comment>
<comment type="subcellular location">
    <molecule>GP2</molecule>
    <subcellularLocation>
        <location evidence="2">Virion membrane</location>
        <topology evidence="4">Single-pass type I membrane protein</topology>
    </subcellularLocation>
    <subcellularLocation>
        <location evidence="2">Host cell membrane</location>
        <topology evidence="4">Single-pass type I membrane protein</topology>
    </subcellularLocation>
    <text evidence="2">In the cell, localizes to the plasma membrane lipid rafts, which probably represent the assembly and budding site.</text>
</comment>
<comment type="subcellular location">
    <molecule>GP1</molecule>
    <subcellularLocation>
        <location evidence="2">Virion membrane</location>
        <topology evidence="2">Peripheral membrane protein</topology>
    </subcellularLocation>
    <subcellularLocation>
        <location evidence="2">Host cell membrane</location>
        <topology evidence="2">Peripheral membrane protein</topology>
    </subcellularLocation>
    <text evidence="2">GP1 is not anchored to the viral envelope, but forms a disulfid-linked complex with the extravirion surface GP2. In the cell, both GP1 and GP2 localize to the plasma membrane lipid rafts, which probably represent the assembly and budding site. GP1 can also be shed after proteolytic processing.</text>
</comment>
<comment type="subcellular location">
    <molecule>Shed GP</molecule>
    <subcellularLocation>
        <location evidence="2">Secreted</location>
    </subcellularLocation>
    <text evidence="2">GP2-delta bound to GP1 (GP1,2-delta) is produced by proteolytic cleavage of GP1,2 by host ADAM17 and shed by the virus.</text>
</comment>
<comment type="domain">
    <text evidence="1">The mucin-like region seems to be involved in the cytotoxic function. This region is also involved in binding to human CLEC10A (By similarity).</text>
</comment>
<comment type="domain">
    <text evidence="1">The coiled coil regions play a role in oligomerization and fusion activity.</text>
</comment>
<comment type="PTM">
    <text evidence="1">The signal peptide region modulates GP's high mannose glycosylation, thereby determining the efficiency of the interactions with DC-SIGN(R).</text>
</comment>
<comment type="PTM">
    <text evidence="1">N-glycosylated.</text>
</comment>
<comment type="PTM">
    <text evidence="1">O-glycosylated in the mucin-like region.</text>
</comment>
<comment type="PTM">
    <text evidence="1">Palmitoylation of GP2 is not required for its function.</text>
</comment>
<comment type="PTM">
    <text evidence="1">Specific enzymatic cleavages in vivo yield mature proteins. The precursor is processed into GP1 and GP2 by host cell furin in the trans Golgi, and maybe by other host proteases, to yield the mature GP1 and GP2 proteins. The cleavage site corresponds to the furin optimal cleavage sequence [KR]-X-[KR]-R. This cleavage does not seem to be required for function. After the internalization of the virus into cell endosomes, GP1 C-terminus is removed by the endosomal proteases cathepsin B, cathepsin L, or both, leaving a 19-kDa N-terminal fragment which is further digested by cathepsin B. Proteolytic processing of GP1,2 by host ADAM17 can remove the transmembrane anchor of GP2 and leads to shedding of complexes consisting in GP1 and truncated GP2 (GP1,2delta) (By similarity).</text>
</comment>
<comment type="RNA editing">
    <location>
        <position position="295" evidence="1"/>
    </location>
    <text evidence="1">Partially edited. RNA editing at this position consists of an insertion of one adenine nucleotide. The sequence displayed here is the full-length transmembrane glycoprotein, derived from the edited RNA. The unedited RNA gives rise to the small secreted glycoprotein (AC O11458) (By similarity).</text>
</comment>
<comment type="miscellaneous">
    <text evidence="1">Filoviruses entry requires functional lipid rafts at the host cell surface.</text>
</comment>
<comment type="miscellaneous">
    <text>Essential for infectivity, as it is the sole viral protein expressed at the virion surface.</text>
</comment>
<comment type="similarity">
    <text evidence="8">Belongs to the filoviruses glycoprotein family.</text>
</comment>